<name>RS3_KLEP7</name>
<comment type="function">
    <text evidence="1">Binds the lower part of the 30S subunit head. Binds mRNA in the 70S ribosome, positioning it for translation.</text>
</comment>
<comment type="subunit">
    <text evidence="1">Part of the 30S ribosomal subunit. Forms a tight complex with proteins S10 and S14.</text>
</comment>
<comment type="similarity">
    <text evidence="1">Belongs to the universal ribosomal protein uS3 family.</text>
</comment>
<proteinExistence type="inferred from homology"/>
<accession>A6TEW6</accession>
<gene>
    <name evidence="1" type="primary">rpsC</name>
    <name type="ordered locus">KPN78578_36760</name>
    <name type="ORF">KPN_03713</name>
</gene>
<feature type="chain" id="PRO_1000086130" description="Small ribosomal subunit protein uS3">
    <location>
        <begin position="1"/>
        <end position="232"/>
    </location>
</feature>
<feature type="domain" description="KH type-2" evidence="1">
    <location>
        <begin position="39"/>
        <end position="107"/>
    </location>
</feature>
<protein>
    <recommendedName>
        <fullName evidence="1">Small ribosomal subunit protein uS3</fullName>
    </recommendedName>
    <alternativeName>
        <fullName evidence="2">30S ribosomal protein S3</fullName>
    </alternativeName>
</protein>
<reference key="1">
    <citation type="submission" date="2006-09" db="EMBL/GenBank/DDBJ databases">
        <authorList>
            <consortium name="The Klebsiella pneumonia Genome Sequencing Project"/>
            <person name="McClelland M."/>
            <person name="Sanderson E.K."/>
            <person name="Spieth J."/>
            <person name="Clifton W.S."/>
            <person name="Latreille P."/>
            <person name="Sabo A."/>
            <person name="Pepin K."/>
            <person name="Bhonagiri V."/>
            <person name="Porwollik S."/>
            <person name="Ali J."/>
            <person name="Wilson R.K."/>
        </authorList>
    </citation>
    <scope>NUCLEOTIDE SEQUENCE [LARGE SCALE GENOMIC DNA]</scope>
    <source>
        <strain>ATCC 700721 / MGH 78578</strain>
    </source>
</reference>
<evidence type="ECO:0000255" key="1">
    <source>
        <dbReference type="HAMAP-Rule" id="MF_01309"/>
    </source>
</evidence>
<evidence type="ECO:0000305" key="2"/>
<organism>
    <name type="scientific">Klebsiella pneumoniae subsp. pneumoniae (strain ATCC 700721 / MGH 78578)</name>
    <dbReference type="NCBI Taxonomy" id="272620"/>
    <lineage>
        <taxon>Bacteria</taxon>
        <taxon>Pseudomonadati</taxon>
        <taxon>Pseudomonadota</taxon>
        <taxon>Gammaproteobacteria</taxon>
        <taxon>Enterobacterales</taxon>
        <taxon>Enterobacteriaceae</taxon>
        <taxon>Klebsiella/Raoultella group</taxon>
        <taxon>Klebsiella</taxon>
        <taxon>Klebsiella pneumoniae complex</taxon>
    </lineage>
</organism>
<dbReference type="EMBL" id="CP000647">
    <property type="protein sequence ID" value="ABR79100.1"/>
    <property type="molecule type" value="Genomic_DNA"/>
</dbReference>
<dbReference type="RefSeq" id="WP_002919766.1">
    <property type="nucleotide sequence ID" value="NC_009648.1"/>
</dbReference>
<dbReference type="SMR" id="A6TEW6"/>
<dbReference type="STRING" id="272620.KPN_03713"/>
<dbReference type="jPOST" id="A6TEW6"/>
<dbReference type="PaxDb" id="272620-KPN_03713"/>
<dbReference type="EnsemblBacteria" id="ABR79100">
    <property type="protein sequence ID" value="ABR79100"/>
    <property type="gene ID" value="KPN_03713"/>
</dbReference>
<dbReference type="GeneID" id="97604570"/>
<dbReference type="KEGG" id="kpn:KPN_03713"/>
<dbReference type="HOGENOM" id="CLU_058591_0_2_6"/>
<dbReference type="Proteomes" id="UP000000265">
    <property type="component" value="Chromosome"/>
</dbReference>
<dbReference type="GO" id="GO:0022627">
    <property type="term" value="C:cytosolic small ribosomal subunit"/>
    <property type="evidence" value="ECO:0007669"/>
    <property type="project" value="TreeGrafter"/>
</dbReference>
<dbReference type="GO" id="GO:0003729">
    <property type="term" value="F:mRNA binding"/>
    <property type="evidence" value="ECO:0007669"/>
    <property type="project" value="UniProtKB-UniRule"/>
</dbReference>
<dbReference type="GO" id="GO:0019843">
    <property type="term" value="F:rRNA binding"/>
    <property type="evidence" value="ECO:0007669"/>
    <property type="project" value="UniProtKB-UniRule"/>
</dbReference>
<dbReference type="GO" id="GO:0003735">
    <property type="term" value="F:structural constituent of ribosome"/>
    <property type="evidence" value="ECO:0007669"/>
    <property type="project" value="InterPro"/>
</dbReference>
<dbReference type="GO" id="GO:0006412">
    <property type="term" value="P:translation"/>
    <property type="evidence" value="ECO:0007669"/>
    <property type="project" value="UniProtKB-UniRule"/>
</dbReference>
<dbReference type="CDD" id="cd02412">
    <property type="entry name" value="KH-II_30S_S3"/>
    <property type="match status" value="1"/>
</dbReference>
<dbReference type="FunFam" id="3.30.1140.32:FF:000001">
    <property type="entry name" value="30S ribosomal protein S3"/>
    <property type="match status" value="1"/>
</dbReference>
<dbReference type="FunFam" id="3.30.300.20:FF:000001">
    <property type="entry name" value="30S ribosomal protein S3"/>
    <property type="match status" value="1"/>
</dbReference>
<dbReference type="Gene3D" id="3.30.300.20">
    <property type="match status" value="1"/>
</dbReference>
<dbReference type="Gene3D" id="3.30.1140.32">
    <property type="entry name" value="Ribosomal protein S3, C-terminal domain"/>
    <property type="match status" value="1"/>
</dbReference>
<dbReference type="HAMAP" id="MF_01309_B">
    <property type="entry name" value="Ribosomal_uS3_B"/>
    <property type="match status" value="1"/>
</dbReference>
<dbReference type="InterPro" id="IPR004087">
    <property type="entry name" value="KH_dom"/>
</dbReference>
<dbReference type="InterPro" id="IPR015946">
    <property type="entry name" value="KH_dom-like_a/b"/>
</dbReference>
<dbReference type="InterPro" id="IPR004044">
    <property type="entry name" value="KH_dom_type_2"/>
</dbReference>
<dbReference type="InterPro" id="IPR009019">
    <property type="entry name" value="KH_sf_prok-type"/>
</dbReference>
<dbReference type="InterPro" id="IPR036419">
    <property type="entry name" value="Ribosomal_S3_C_sf"/>
</dbReference>
<dbReference type="InterPro" id="IPR005704">
    <property type="entry name" value="Ribosomal_uS3_bac-typ"/>
</dbReference>
<dbReference type="InterPro" id="IPR001351">
    <property type="entry name" value="Ribosomal_uS3_C"/>
</dbReference>
<dbReference type="InterPro" id="IPR018280">
    <property type="entry name" value="Ribosomal_uS3_CS"/>
</dbReference>
<dbReference type="NCBIfam" id="TIGR01009">
    <property type="entry name" value="rpsC_bact"/>
    <property type="match status" value="1"/>
</dbReference>
<dbReference type="PANTHER" id="PTHR11760">
    <property type="entry name" value="30S/40S RIBOSOMAL PROTEIN S3"/>
    <property type="match status" value="1"/>
</dbReference>
<dbReference type="PANTHER" id="PTHR11760:SF19">
    <property type="entry name" value="SMALL RIBOSOMAL SUBUNIT PROTEIN US3C"/>
    <property type="match status" value="1"/>
</dbReference>
<dbReference type="Pfam" id="PF07650">
    <property type="entry name" value="KH_2"/>
    <property type="match status" value="1"/>
</dbReference>
<dbReference type="Pfam" id="PF00189">
    <property type="entry name" value="Ribosomal_S3_C"/>
    <property type="match status" value="1"/>
</dbReference>
<dbReference type="SMART" id="SM00322">
    <property type="entry name" value="KH"/>
    <property type="match status" value="1"/>
</dbReference>
<dbReference type="SUPFAM" id="SSF54814">
    <property type="entry name" value="Prokaryotic type KH domain (KH-domain type II)"/>
    <property type="match status" value="1"/>
</dbReference>
<dbReference type="SUPFAM" id="SSF54821">
    <property type="entry name" value="Ribosomal protein S3 C-terminal domain"/>
    <property type="match status" value="1"/>
</dbReference>
<dbReference type="PROSITE" id="PS50823">
    <property type="entry name" value="KH_TYPE_2"/>
    <property type="match status" value="1"/>
</dbReference>
<dbReference type="PROSITE" id="PS00548">
    <property type="entry name" value="RIBOSOMAL_S3"/>
    <property type="match status" value="1"/>
</dbReference>
<keyword id="KW-0687">Ribonucleoprotein</keyword>
<keyword id="KW-0689">Ribosomal protein</keyword>
<keyword id="KW-0694">RNA-binding</keyword>
<keyword id="KW-0699">rRNA-binding</keyword>
<sequence length="232" mass="25839">MGQKVHPNGIRLGIVKPWNSTWFANTKEFADNLDSDFKVRQFLTKELAKASVSRIVIERPAKSIRVTIHTARPGIVIGKKGEDVEKLRKVVADIAGVPAQINIAEVRKPELDAKLVADSITSQLERRVMFRRAMKRAVQNAMRLGAKGIKVEVSGRLGGAEIARTEWYREGRVPLHTLRADIDYNTSEAHTTYGVIGVKVWIFKGEILGGMAAVEQPEPAAQPKKQQRKGRK</sequence>